<name>LEC_LENCC</name>
<sequence>MASLQTQMISFYLIFLSILLTTIFFFKVNSTETTSFSITKFSPDQKNLIFQGDGYTTKGKLTLTKAVKSTVGRALYSTPIHIWDRDTGNVANFVTSFTFVIDAPSSYNVADGFTFFIAPVDTKPQTGGGYLGVFNSKEYDKTSQTVAVEFDTFYNAAWDPSNKERHIGIDVNSIKSVNTKSWNLQNGERANVVIAFNAATNVLTVTLTYPNSLEEENVTSYTLNEVVPLKDVVPEWVRIGFSATTGAEFAAHEVHSWSFHSELGGTSSSKQAADA</sequence>
<reference evidence="6" key="1">
    <citation type="journal article" date="2004" name="Theor. Appl. Genet.">
        <title>Identification and isolation of lectin nucleotide sequences and species relationships in the genus Lens (Miller).</title>
        <authorList>
            <person name="Galasso I."/>
            <person name="Lioi L."/>
            <person name="Lanave C."/>
            <person name="Bollini R."/>
            <person name="Sparvoli F."/>
        </authorList>
    </citation>
    <scope>NUCLEOTIDE SEQUENCE [GENOMIC DNA]</scope>
    <source>
        <strain evidence="7">cv. Eston</strain>
        <strain evidence="6">cv. Laird</strain>
        <tissue evidence="6">Leaf</tissue>
    </source>
</reference>
<accession>Q93WH6</accession>
<accession>Q93X50</accession>
<organism>
    <name type="scientific">Lens culinaris subsp. culinaris</name>
    <name type="common">Cultivated lentil</name>
    <name type="synonym">Lens esculenta</name>
    <dbReference type="NCBI Taxonomy" id="362247"/>
    <lineage>
        <taxon>Eukaryota</taxon>
        <taxon>Viridiplantae</taxon>
        <taxon>Streptophyta</taxon>
        <taxon>Embryophyta</taxon>
        <taxon>Tracheophyta</taxon>
        <taxon>Spermatophyta</taxon>
        <taxon>Magnoliopsida</taxon>
        <taxon>eudicotyledons</taxon>
        <taxon>Gunneridae</taxon>
        <taxon>Pentapetalae</taxon>
        <taxon>rosids</taxon>
        <taxon>fabids</taxon>
        <taxon>Fabales</taxon>
        <taxon>Fabaceae</taxon>
        <taxon>Papilionoideae</taxon>
        <taxon>50 kb inversion clade</taxon>
        <taxon>NPAAA clade</taxon>
        <taxon>Hologalegina</taxon>
        <taxon>IRL clade</taxon>
        <taxon>Fabeae</taxon>
        <taxon>Lens</taxon>
    </lineage>
</organism>
<evidence type="ECO:0000250" key="1"/>
<evidence type="ECO:0000250" key="2">
    <source>
        <dbReference type="UniProtKB" id="P02867"/>
    </source>
</evidence>
<evidence type="ECO:0000250" key="3">
    <source>
        <dbReference type="UniProtKB" id="P02870"/>
    </source>
</evidence>
<evidence type="ECO:0000255" key="4"/>
<evidence type="ECO:0000305" key="5"/>
<evidence type="ECO:0000312" key="6">
    <source>
        <dbReference type="EMBL" id="CAC42123.2"/>
    </source>
</evidence>
<evidence type="ECO:0000312" key="7">
    <source>
        <dbReference type="EMBL" id="CAC42124.2"/>
    </source>
</evidence>
<feature type="signal peptide" evidence="3">
    <location>
        <begin position="1"/>
        <end position="30"/>
    </location>
</feature>
<feature type="chain" id="PRO_0000223510" description="Lectin beta chain" evidence="3">
    <location>
        <begin position="31"/>
        <end position="210"/>
    </location>
</feature>
<feature type="propeptide" id="PRO_0000223511" evidence="3">
    <location>
        <begin position="211"/>
        <end position="217"/>
    </location>
</feature>
<feature type="chain" id="PRO_0000223512" description="Lectin alpha chain" evidence="3">
    <location>
        <begin position="218"/>
        <end position="269"/>
    </location>
</feature>
<feature type="propeptide" id="PRO_0000223513" evidence="3">
    <location>
        <begin position="270"/>
        <end position="275"/>
    </location>
</feature>
<feature type="binding site" evidence="3">
    <location>
        <position position="111"/>
    </location>
    <ligand>
        <name>D-glucose</name>
        <dbReference type="ChEBI" id="CHEBI:4167"/>
    </ligand>
</feature>
<feature type="binding site" evidence="1">
    <location>
        <position position="129"/>
    </location>
    <ligand>
        <name>D-glucose</name>
        <dbReference type="ChEBI" id="CHEBI:4167"/>
    </ligand>
</feature>
<feature type="binding site" evidence="3">
    <location>
        <position position="149"/>
    </location>
    <ligand>
        <name>Mn(2+)</name>
        <dbReference type="ChEBI" id="CHEBI:29035"/>
    </ligand>
</feature>
<feature type="binding site" evidence="3">
    <location>
        <position position="151"/>
    </location>
    <ligand>
        <name>Ca(2+)</name>
        <dbReference type="ChEBI" id="CHEBI:29108"/>
    </ligand>
</feature>
<feature type="binding site" evidence="3">
    <location>
        <position position="151"/>
    </location>
    <ligand>
        <name>Mn(2+)</name>
        <dbReference type="ChEBI" id="CHEBI:29035"/>
    </ligand>
</feature>
<feature type="binding site" evidence="1">
    <location>
        <position position="153"/>
    </location>
    <ligand>
        <name>Ca(2+)</name>
        <dbReference type="ChEBI" id="CHEBI:29108"/>
    </ligand>
</feature>
<feature type="binding site" evidence="3">
    <location>
        <position position="155"/>
    </location>
    <ligand>
        <name>Ca(2+)</name>
        <dbReference type="ChEBI" id="CHEBI:29108"/>
    </ligand>
</feature>
<feature type="binding site" evidence="3">
    <location>
        <position position="159"/>
    </location>
    <ligand>
        <name>Ca(2+)</name>
        <dbReference type="ChEBI" id="CHEBI:29108"/>
    </ligand>
</feature>
<feature type="binding site" evidence="3">
    <location>
        <position position="159"/>
    </location>
    <ligand>
        <name>Mn(2+)</name>
        <dbReference type="ChEBI" id="CHEBI:29035"/>
    </ligand>
</feature>
<feature type="binding site" evidence="3">
    <location>
        <position position="166"/>
    </location>
    <ligand>
        <name>Mn(2+)</name>
        <dbReference type="ChEBI" id="CHEBI:29035"/>
    </ligand>
</feature>
<feature type="binding site" evidence="1">
    <location>
        <position position="246"/>
    </location>
    <ligand>
        <name>D-glucose</name>
        <dbReference type="ChEBI" id="CHEBI:4167"/>
    </ligand>
</feature>
<feature type="binding site" evidence="1">
    <location>
        <position position="247"/>
    </location>
    <ligand>
        <name>D-glucose</name>
        <dbReference type="ChEBI" id="CHEBI:4167"/>
    </ligand>
</feature>
<feature type="site" description="Cleavage" evidence="3">
    <location>
        <begin position="210"/>
        <end position="211"/>
    </location>
</feature>
<feature type="site" description="Cleavage" evidence="3">
    <location>
        <begin position="217"/>
        <end position="218"/>
    </location>
</feature>
<feature type="sequence conflict" description="In Ref. 1; CAC42122." evidence="5" ref="1">
    <original>K</original>
    <variation>Q</variation>
    <location>
        <position position="46"/>
    </location>
</feature>
<protein>
    <recommendedName>
        <fullName>Lectin</fullName>
    </recommendedName>
    <component>
        <recommendedName>
            <fullName>Lectin beta chain</fullName>
        </recommendedName>
    </component>
    <component>
        <recommendedName>
            <fullName>Lectin alpha chain</fullName>
        </recommendedName>
    </component>
</protein>
<dbReference type="EMBL" id="AJ318216">
    <property type="protein sequence ID" value="CAC42122.1"/>
    <property type="molecule type" value="Genomic_DNA"/>
</dbReference>
<dbReference type="EMBL" id="AJ318217">
    <property type="protein sequence ID" value="CAC42123.2"/>
    <property type="molecule type" value="Genomic_DNA"/>
</dbReference>
<dbReference type="EMBL" id="AJ318218">
    <property type="protein sequence ID" value="CAC42124.2"/>
    <property type="molecule type" value="Genomic_DNA"/>
</dbReference>
<dbReference type="SMR" id="Q93WH6"/>
<dbReference type="GO" id="GO:0005537">
    <property type="term" value="F:D-mannose binding"/>
    <property type="evidence" value="ECO:0007669"/>
    <property type="project" value="UniProtKB-KW"/>
</dbReference>
<dbReference type="GO" id="GO:0046872">
    <property type="term" value="F:metal ion binding"/>
    <property type="evidence" value="ECO:0007669"/>
    <property type="project" value="UniProtKB-KW"/>
</dbReference>
<dbReference type="CDD" id="cd06899">
    <property type="entry name" value="lectin_legume_LecRK_Arcelin_ConA"/>
    <property type="match status" value="1"/>
</dbReference>
<dbReference type="FunFam" id="2.60.120.200:FF:000237">
    <property type="entry name" value="Mannose/glucose-specific lectin"/>
    <property type="match status" value="1"/>
</dbReference>
<dbReference type="Gene3D" id="2.60.120.200">
    <property type="match status" value="1"/>
</dbReference>
<dbReference type="InterPro" id="IPR013320">
    <property type="entry name" value="ConA-like_dom_sf"/>
</dbReference>
<dbReference type="InterPro" id="IPR016363">
    <property type="entry name" value="L-lectin"/>
</dbReference>
<dbReference type="InterPro" id="IPR000985">
    <property type="entry name" value="Lectin_LegA_CS"/>
</dbReference>
<dbReference type="InterPro" id="IPR019825">
    <property type="entry name" value="Lectin_legB_Mn/Ca_BS"/>
</dbReference>
<dbReference type="InterPro" id="IPR001220">
    <property type="entry name" value="Legume_lectin_dom"/>
</dbReference>
<dbReference type="InterPro" id="IPR050258">
    <property type="entry name" value="Leguminous_Lectin"/>
</dbReference>
<dbReference type="PANTHER" id="PTHR32401">
    <property type="entry name" value="CONCANAVALIN A-LIKE LECTIN FAMILY PROTEIN"/>
    <property type="match status" value="1"/>
</dbReference>
<dbReference type="PANTHER" id="PTHR32401:SF45">
    <property type="entry name" value="LECTIN"/>
    <property type="match status" value="1"/>
</dbReference>
<dbReference type="Pfam" id="PF00139">
    <property type="entry name" value="Lectin_legB"/>
    <property type="match status" value="1"/>
</dbReference>
<dbReference type="PIRSF" id="PIRSF002690">
    <property type="entry name" value="L-type_lectin_plant"/>
    <property type="match status" value="1"/>
</dbReference>
<dbReference type="SUPFAM" id="SSF49899">
    <property type="entry name" value="Concanavalin A-like lectins/glucanases"/>
    <property type="match status" value="1"/>
</dbReference>
<dbReference type="PROSITE" id="PS00308">
    <property type="entry name" value="LECTIN_LEGUME_ALPHA"/>
    <property type="match status" value="1"/>
</dbReference>
<dbReference type="PROSITE" id="PS00307">
    <property type="entry name" value="LECTIN_LEGUME_BETA"/>
    <property type="match status" value="1"/>
</dbReference>
<keyword id="KW-0106">Calcium</keyword>
<keyword id="KW-0430">Lectin</keyword>
<keyword id="KW-0464">Manganese</keyword>
<keyword id="KW-0465">Mannose-binding</keyword>
<keyword id="KW-0479">Metal-binding</keyword>
<keyword id="KW-0732">Signal</keyword>
<proteinExistence type="inferred from homology"/>
<comment type="function">
    <text evidence="2">D-mannose specific lectin.</text>
</comment>
<comment type="subunit">
    <text evidence="1">Heterotetramer of two alpha and two beta chains.</text>
</comment>
<comment type="PTM">
    <text evidence="3">The mature form consists of two chains, alpha and beta, produced by cleavage of the immature protein. These remain cleaved, yet fold together to form one subunit (By similarity).</text>
</comment>
<comment type="miscellaneous">
    <text evidence="3">Binds two manganese (or other transition metal) ions and two calcium ions per heterotetramer. The metal ions are essential for the saccharide-binding activity (By similarity).</text>
</comment>
<comment type="similarity">
    <text evidence="4">Belongs to the leguminous lectin family.</text>
</comment>